<keyword id="KW-0010">Activator</keyword>
<keyword id="KW-0238">DNA-binding</keyword>
<keyword id="KW-1185">Reference proteome</keyword>
<keyword id="KW-0804">Transcription</keyword>
<keyword id="KW-0805">Transcription regulation</keyword>
<evidence type="ECO:0000250" key="1">
    <source>
        <dbReference type="UniProtKB" id="O14467"/>
    </source>
</evidence>
<evidence type="ECO:0000255" key="2">
    <source>
        <dbReference type="PROSITE-ProRule" id="PRU00257"/>
    </source>
</evidence>
<evidence type="ECO:0000305" key="3"/>
<name>MBF1_EMENI</name>
<accession>Q5B8Y4</accession>
<accession>C8VIX8</accession>
<dbReference type="EMBL" id="AACD01000051">
    <property type="protein sequence ID" value="EAA63567.1"/>
    <property type="molecule type" value="Genomic_DNA"/>
</dbReference>
<dbReference type="EMBL" id="BN001306">
    <property type="protein sequence ID" value="CBF83598.1"/>
    <property type="molecule type" value="Genomic_DNA"/>
</dbReference>
<dbReference type="RefSeq" id="XP_660600.1">
    <property type="nucleotide sequence ID" value="XM_655508.1"/>
</dbReference>
<dbReference type="SMR" id="Q5B8Y4"/>
<dbReference type="FunCoup" id="Q5B8Y4">
    <property type="interactions" value="744"/>
</dbReference>
<dbReference type="STRING" id="227321.Q5B8Y4"/>
<dbReference type="EnsemblFungi" id="CBF83598">
    <property type="protein sequence ID" value="CBF83598"/>
    <property type="gene ID" value="ANIA_02996"/>
</dbReference>
<dbReference type="KEGG" id="ani:ANIA_02996"/>
<dbReference type="VEuPathDB" id="FungiDB:AN2996"/>
<dbReference type="eggNOG" id="KOG3398">
    <property type="taxonomic scope" value="Eukaryota"/>
</dbReference>
<dbReference type="HOGENOM" id="CLU_112609_0_0_1"/>
<dbReference type="InParanoid" id="Q5B8Y4"/>
<dbReference type="OMA" id="GKNKSCK"/>
<dbReference type="OrthoDB" id="10253401at2759"/>
<dbReference type="Proteomes" id="UP000000560">
    <property type="component" value="Chromosome VI"/>
</dbReference>
<dbReference type="GO" id="GO:0005634">
    <property type="term" value="C:nucleus"/>
    <property type="evidence" value="ECO:0000318"/>
    <property type="project" value="GO_Central"/>
</dbReference>
<dbReference type="GO" id="GO:0003677">
    <property type="term" value="F:DNA binding"/>
    <property type="evidence" value="ECO:0007669"/>
    <property type="project" value="UniProtKB-KW"/>
</dbReference>
<dbReference type="CDD" id="cd00093">
    <property type="entry name" value="HTH_XRE"/>
    <property type="match status" value="1"/>
</dbReference>
<dbReference type="FunFam" id="1.10.260.40:FF:000030">
    <property type="entry name" value="Coactivator bridging factor 1"/>
    <property type="match status" value="1"/>
</dbReference>
<dbReference type="Gene3D" id="1.10.260.40">
    <property type="entry name" value="lambda repressor-like DNA-binding domains"/>
    <property type="match status" value="1"/>
</dbReference>
<dbReference type="InterPro" id="IPR001387">
    <property type="entry name" value="Cro/C1-type_HTH"/>
</dbReference>
<dbReference type="InterPro" id="IPR010982">
    <property type="entry name" value="Lambda_DNA-bd_dom_sf"/>
</dbReference>
<dbReference type="InterPro" id="IPR013729">
    <property type="entry name" value="MBF1_N"/>
</dbReference>
<dbReference type="PANTHER" id="PTHR10245:SF15">
    <property type="entry name" value="ENDOTHELIAL DIFFERENTIATION-RELATED FACTOR 1"/>
    <property type="match status" value="1"/>
</dbReference>
<dbReference type="PANTHER" id="PTHR10245">
    <property type="entry name" value="ENDOTHELIAL DIFFERENTIATION-RELATED FACTOR 1 MULTIPROTEIN BRIDGING FACTOR 1"/>
    <property type="match status" value="1"/>
</dbReference>
<dbReference type="Pfam" id="PF01381">
    <property type="entry name" value="HTH_3"/>
    <property type="match status" value="1"/>
</dbReference>
<dbReference type="Pfam" id="PF08523">
    <property type="entry name" value="MBF1"/>
    <property type="match status" value="1"/>
</dbReference>
<dbReference type="SMART" id="SM00530">
    <property type="entry name" value="HTH_XRE"/>
    <property type="match status" value="1"/>
</dbReference>
<dbReference type="SUPFAM" id="SSF47413">
    <property type="entry name" value="lambda repressor-like DNA-binding domains"/>
    <property type="match status" value="1"/>
</dbReference>
<dbReference type="PROSITE" id="PS50943">
    <property type="entry name" value="HTH_CROC1"/>
    <property type="match status" value="1"/>
</dbReference>
<gene>
    <name type="primary">mbf1</name>
    <name type="ORF">AN2996</name>
</gene>
<comment type="function">
    <text evidence="1">Transcriptional coactivator that stimulates GCN4-dependent transcriptional activity by bridging the DNA-binding region of GCN4 and TBP (SPT15), thereby recruiting TBP to GCN4-bound promoters. Involved in induction of the ribosome quality control (RQC) pathway; a pathway that degrades nascent peptide chains during problematic translation. Required to prevent stalled ribosomes from frameshifting.</text>
</comment>
<comment type="similarity">
    <text evidence="3">Belongs to the MBF1 family.</text>
</comment>
<protein>
    <recommendedName>
        <fullName>Multiprotein-bridging factor 1</fullName>
    </recommendedName>
</protein>
<reference key="1">
    <citation type="journal article" date="2005" name="Nature">
        <title>Sequencing of Aspergillus nidulans and comparative analysis with A. fumigatus and A. oryzae.</title>
        <authorList>
            <person name="Galagan J.E."/>
            <person name="Calvo S.E."/>
            <person name="Cuomo C."/>
            <person name="Ma L.-J."/>
            <person name="Wortman J.R."/>
            <person name="Batzoglou S."/>
            <person name="Lee S.-I."/>
            <person name="Bastuerkmen M."/>
            <person name="Spevak C.C."/>
            <person name="Clutterbuck J."/>
            <person name="Kapitonov V."/>
            <person name="Jurka J."/>
            <person name="Scazzocchio C."/>
            <person name="Farman M.L."/>
            <person name="Butler J."/>
            <person name="Purcell S."/>
            <person name="Harris S."/>
            <person name="Braus G.H."/>
            <person name="Draht O."/>
            <person name="Busch S."/>
            <person name="D'Enfert C."/>
            <person name="Bouchier C."/>
            <person name="Goldman G.H."/>
            <person name="Bell-Pedersen D."/>
            <person name="Griffiths-Jones S."/>
            <person name="Doonan J.H."/>
            <person name="Yu J."/>
            <person name="Vienken K."/>
            <person name="Pain A."/>
            <person name="Freitag M."/>
            <person name="Selker E.U."/>
            <person name="Archer D.B."/>
            <person name="Penalva M.A."/>
            <person name="Oakley B.R."/>
            <person name="Momany M."/>
            <person name="Tanaka T."/>
            <person name="Kumagai T."/>
            <person name="Asai K."/>
            <person name="Machida M."/>
            <person name="Nierman W.C."/>
            <person name="Denning D.W."/>
            <person name="Caddick M.X."/>
            <person name="Hynes M."/>
            <person name="Paoletti M."/>
            <person name="Fischer R."/>
            <person name="Miller B.L."/>
            <person name="Dyer P.S."/>
            <person name="Sachs M.S."/>
            <person name="Osmani S.A."/>
            <person name="Birren B.W."/>
        </authorList>
    </citation>
    <scope>NUCLEOTIDE SEQUENCE [LARGE SCALE GENOMIC DNA]</scope>
    <source>
        <strain>FGSC A4 / ATCC 38163 / CBS 112.46 / NRRL 194 / M139</strain>
    </source>
</reference>
<reference key="2">
    <citation type="journal article" date="2009" name="Fungal Genet. Biol.">
        <title>The 2008 update of the Aspergillus nidulans genome annotation: a community effort.</title>
        <authorList>
            <person name="Wortman J.R."/>
            <person name="Gilsenan J.M."/>
            <person name="Joardar V."/>
            <person name="Deegan J."/>
            <person name="Clutterbuck J."/>
            <person name="Andersen M.R."/>
            <person name="Archer D."/>
            <person name="Bencina M."/>
            <person name="Braus G."/>
            <person name="Coutinho P."/>
            <person name="von Dohren H."/>
            <person name="Doonan J."/>
            <person name="Driessen A.J."/>
            <person name="Durek P."/>
            <person name="Espeso E."/>
            <person name="Fekete E."/>
            <person name="Flipphi M."/>
            <person name="Estrada C.G."/>
            <person name="Geysens S."/>
            <person name="Goldman G."/>
            <person name="de Groot P.W."/>
            <person name="Hansen K."/>
            <person name="Harris S.D."/>
            <person name="Heinekamp T."/>
            <person name="Helmstaedt K."/>
            <person name="Henrissat B."/>
            <person name="Hofmann G."/>
            <person name="Homan T."/>
            <person name="Horio T."/>
            <person name="Horiuchi H."/>
            <person name="James S."/>
            <person name="Jones M."/>
            <person name="Karaffa L."/>
            <person name="Karanyi Z."/>
            <person name="Kato M."/>
            <person name="Keller N."/>
            <person name="Kelly D.E."/>
            <person name="Kiel J.A."/>
            <person name="Kim J.M."/>
            <person name="van der Klei I.J."/>
            <person name="Klis F.M."/>
            <person name="Kovalchuk A."/>
            <person name="Krasevec N."/>
            <person name="Kubicek C.P."/>
            <person name="Liu B."/>
            <person name="Maccabe A."/>
            <person name="Meyer V."/>
            <person name="Mirabito P."/>
            <person name="Miskei M."/>
            <person name="Mos M."/>
            <person name="Mullins J."/>
            <person name="Nelson D.R."/>
            <person name="Nielsen J."/>
            <person name="Oakley B.R."/>
            <person name="Osmani S.A."/>
            <person name="Pakula T."/>
            <person name="Paszewski A."/>
            <person name="Paulsen I."/>
            <person name="Pilsyk S."/>
            <person name="Pocsi I."/>
            <person name="Punt P.J."/>
            <person name="Ram A.F."/>
            <person name="Ren Q."/>
            <person name="Robellet X."/>
            <person name="Robson G."/>
            <person name="Seiboth B."/>
            <person name="van Solingen P."/>
            <person name="Specht T."/>
            <person name="Sun J."/>
            <person name="Taheri-Talesh N."/>
            <person name="Takeshita N."/>
            <person name="Ussery D."/>
            <person name="vanKuyk P.A."/>
            <person name="Visser H."/>
            <person name="van de Vondervoort P.J."/>
            <person name="de Vries R.P."/>
            <person name="Walton J."/>
            <person name="Xiang X."/>
            <person name="Xiong Y."/>
            <person name="Zeng A.P."/>
            <person name="Brandt B.W."/>
            <person name="Cornell M.J."/>
            <person name="van den Hondel C.A."/>
            <person name="Visser J."/>
            <person name="Oliver S.G."/>
            <person name="Turner G."/>
        </authorList>
    </citation>
    <scope>GENOME REANNOTATION</scope>
    <source>
        <strain>FGSC A4 / ATCC 38163 / CBS 112.46 / NRRL 194 / M139</strain>
    </source>
</reference>
<sequence>MSDWDSVTRIGSKNRGGPVVRETVIKGKSALNAAQRQGLVVGTEKKFASGNSAGRASAVEGQHLTKVDRSDDIVKPKTVGLQVADAIKKRRTDEGYKMTQKELATKCNTTVTVIQDFERGTAAPDQKVLSAMERVLNIKLRGSDIGKEKFPKKK</sequence>
<feature type="chain" id="PRO_0000149807" description="Multiprotein-bridging factor 1">
    <location>
        <begin position="1"/>
        <end position="154"/>
    </location>
</feature>
<feature type="domain" description="HTH cro/C1-type" evidence="2">
    <location>
        <begin position="87"/>
        <end position="143"/>
    </location>
</feature>
<feature type="DNA-binding region" description="H-T-H motif" evidence="2">
    <location>
        <begin position="100"/>
        <end position="119"/>
    </location>
</feature>
<organism>
    <name type="scientific">Emericella nidulans (strain FGSC A4 / ATCC 38163 / CBS 112.46 / NRRL 194 / M139)</name>
    <name type="common">Aspergillus nidulans</name>
    <dbReference type="NCBI Taxonomy" id="227321"/>
    <lineage>
        <taxon>Eukaryota</taxon>
        <taxon>Fungi</taxon>
        <taxon>Dikarya</taxon>
        <taxon>Ascomycota</taxon>
        <taxon>Pezizomycotina</taxon>
        <taxon>Eurotiomycetes</taxon>
        <taxon>Eurotiomycetidae</taxon>
        <taxon>Eurotiales</taxon>
        <taxon>Aspergillaceae</taxon>
        <taxon>Aspergillus</taxon>
        <taxon>Aspergillus subgen. Nidulantes</taxon>
    </lineage>
</organism>
<proteinExistence type="inferred from homology"/>